<keyword id="KW-0456">Lyase</keyword>
<protein>
    <recommendedName>
        <fullName evidence="1">Putative pterin-4-alpha-carbinolamine dehydratase</fullName>
        <shortName evidence="1">PHS</shortName>
        <ecNumber evidence="1">4.2.1.96</ecNumber>
    </recommendedName>
    <alternativeName>
        <fullName evidence="1">4-alpha-hydroxy-tetrahydropterin dehydratase</fullName>
    </alternativeName>
    <alternativeName>
        <fullName evidence="1">Pterin carbinolamine dehydratase</fullName>
        <shortName evidence="1">PCD</shortName>
    </alternativeName>
</protein>
<organism>
    <name type="scientific">Shewanella piezotolerans (strain WP3 / JCM 13877)</name>
    <dbReference type="NCBI Taxonomy" id="225849"/>
    <lineage>
        <taxon>Bacteria</taxon>
        <taxon>Pseudomonadati</taxon>
        <taxon>Pseudomonadota</taxon>
        <taxon>Gammaproteobacteria</taxon>
        <taxon>Alteromonadales</taxon>
        <taxon>Shewanellaceae</taxon>
        <taxon>Shewanella</taxon>
    </lineage>
</organism>
<feature type="chain" id="PRO_1000192936" description="Putative pterin-4-alpha-carbinolamine dehydratase">
    <location>
        <begin position="1"/>
        <end position="112"/>
    </location>
</feature>
<sequence length="112" mass="12754">MTELAQMKCEACQADAPKVSDAELGELVRMIPDWTVEVRDGIMQLERVYKFKNFKLAMAFTNKLADLAEADFHHPGILTEWGKVTVTWWSHSIKGLHKNDFIMAAKTDTLLD</sequence>
<comment type="catalytic activity">
    <reaction evidence="1">
        <text>(4aS,6R)-4a-hydroxy-L-erythro-5,6,7,8-tetrahydrobiopterin = (6R)-L-erythro-6,7-dihydrobiopterin + H2O</text>
        <dbReference type="Rhea" id="RHEA:11920"/>
        <dbReference type="ChEBI" id="CHEBI:15377"/>
        <dbReference type="ChEBI" id="CHEBI:15642"/>
        <dbReference type="ChEBI" id="CHEBI:43120"/>
        <dbReference type="EC" id="4.2.1.96"/>
    </reaction>
</comment>
<comment type="similarity">
    <text evidence="1">Belongs to the pterin-4-alpha-carbinolamine dehydratase family.</text>
</comment>
<accession>B8CLA1</accession>
<evidence type="ECO:0000255" key="1">
    <source>
        <dbReference type="HAMAP-Rule" id="MF_00434"/>
    </source>
</evidence>
<reference key="1">
    <citation type="journal article" date="2008" name="PLoS ONE">
        <title>Environmental adaptation: genomic analysis of the piezotolerant and psychrotolerant deep-sea iron reducing bacterium Shewanella piezotolerans WP3.</title>
        <authorList>
            <person name="Wang F."/>
            <person name="Wang J."/>
            <person name="Jian H."/>
            <person name="Zhang B."/>
            <person name="Li S."/>
            <person name="Wang F."/>
            <person name="Zeng X."/>
            <person name="Gao L."/>
            <person name="Bartlett D.H."/>
            <person name="Yu J."/>
            <person name="Hu S."/>
            <person name="Xiao X."/>
        </authorList>
    </citation>
    <scope>NUCLEOTIDE SEQUENCE [LARGE SCALE GENOMIC DNA]</scope>
    <source>
        <strain>WP3 / JCM 13877</strain>
    </source>
</reference>
<proteinExistence type="inferred from homology"/>
<gene>
    <name type="ordered locus">swp_1651</name>
</gene>
<name>PHS_SHEPW</name>
<dbReference type="EC" id="4.2.1.96" evidence="1"/>
<dbReference type="EMBL" id="CP000472">
    <property type="protein sequence ID" value="ACJ28427.1"/>
    <property type="molecule type" value="Genomic_DNA"/>
</dbReference>
<dbReference type="RefSeq" id="WP_020911805.1">
    <property type="nucleotide sequence ID" value="NC_011566.1"/>
</dbReference>
<dbReference type="SMR" id="B8CLA1"/>
<dbReference type="STRING" id="225849.swp_1651"/>
<dbReference type="KEGG" id="swp:swp_1651"/>
<dbReference type="eggNOG" id="COG2154">
    <property type="taxonomic scope" value="Bacteria"/>
</dbReference>
<dbReference type="HOGENOM" id="CLU_081974_2_2_6"/>
<dbReference type="OrthoDB" id="5294615at2"/>
<dbReference type="Proteomes" id="UP000000753">
    <property type="component" value="Chromosome"/>
</dbReference>
<dbReference type="GO" id="GO:0008124">
    <property type="term" value="F:4-alpha-hydroxytetrahydrobiopterin dehydratase activity"/>
    <property type="evidence" value="ECO:0007669"/>
    <property type="project" value="UniProtKB-UniRule"/>
</dbReference>
<dbReference type="GO" id="GO:0006729">
    <property type="term" value="P:tetrahydrobiopterin biosynthetic process"/>
    <property type="evidence" value="ECO:0007669"/>
    <property type="project" value="InterPro"/>
</dbReference>
<dbReference type="CDD" id="cd00913">
    <property type="entry name" value="PCD_DCoH_subfamily_a"/>
    <property type="match status" value="1"/>
</dbReference>
<dbReference type="Gene3D" id="3.30.1360.20">
    <property type="entry name" value="Transcriptional coactivator/pterin dehydratase"/>
    <property type="match status" value="1"/>
</dbReference>
<dbReference type="HAMAP" id="MF_00434">
    <property type="entry name" value="Pterin_4_alpha"/>
    <property type="match status" value="1"/>
</dbReference>
<dbReference type="InterPro" id="IPR036428">
    <property type="entry name" value="PCD_sf"/>
</dbReference>
<dbReference type="InterPro" id="IPR050376">
    <property type="entry name" value="Pterin-4-alpha-carb_dehyd"/>
</dbReference>
<dbReference type="InterPro" id="IPR001533">
    <property type="entry name" value="Pterin_deHydtase"/>
</dbReference>
<dbReference type="NCBIfam" id="NF002016">
    <property type="entry name" value="PRK00823.1-1"/>
    <property type="match status" value="1"/>
</dbReference>
<dbReference type="PANTHER" id="PTHR42805">
    <property type="entry name" value="PTERIN-4-ALPHA-CARBINOLAMINE DEHYDRATASE-RELATED"/>
    <property type="match status" value="1"/>
</dbReference>
<dbReference type="PANTHER" id="PTHR42805:SF1">
    <property type="entry name" value="PTERIN-4-ALPHA-CARBINOLAMINE DEHYDRATASE-RELATED"/>
    <property type="match status" value="1"/>
</dbReference>
<dbReference type="Pfam" id="PF01329">
    <property type="entry name" value="Pterin_4a"/>
    <property type="match status" value="1"/>
</dbReference>
<dbReference type="SUPFAM" id="SSF55248">
    <property type="entry name" value="PCD-like"/>
    <property type="match status" value="1"/>
</dbReference>